<name>CYSZ_SHISS</name>
<protein>
    <recommendedName>
        <fullName evidence="1">Sulfate transporter CysZ</fullName>
    </recommendedName>
</protein>
<evidence type="ECO:0000255" key="1">
    <source>
        <dbReference type="HAMAP-Rule" id="MF_00468"/>
    </source>
</evidence>
<keyword id="KW-0028">Amino-acid biosynthesis</keyword>
<keyword id="KW-0997">Cell inner membrane</keyword>
<keyword id="KW-1003">Cell membrane</keyword>
<keyword id="KW-0198">Cysteine biosynthesis</keyword>
<keyword id="KW-0472">Membrane</keyword>
<keyword id="KW-1185">Reference proteome</keyword>
<keyword id="KW-0764">Sulfate transport</keyword>
<keyword id="KW-0812">Transmembrane</keyword>
<keyword id="KW-1133">Transmembrane helix</keyword>
<keyword id="KW-0813">Transport</keyword>
<accession>Q3YZC9</accession>
<sequence length="253" mass="29305">MVSSFTSAPRSGFYYFAQGWKLVSQPGIRRFVILPLLVNILLMGGAFWWLFTQLDVWIPTLMSYVPDWLQWLSYLLWPLAVISVLLVFGYFFSTIANWIAAPFNGLLAEQLEARLTGATPPDTGIFGIMKDVPRIMKREWQKFAWYLPRAIVLLILYFIPGIGQTVAPVLWFLFSAWMLAIQYCDYPFDNHKVPFKEMRTALRTRKITNMQFGALTSLFTMIPLLNLFIMPVAVCGATAMWVDCYRDKHAMWR</sequence>
<organism>
    <name type="scientific">Shigella sonnei (strain Ss046)</name>
    <dbReference type="NCBI Taxonomy" id="300269"/>
    <lineage>
        <taxon>Bacteria</taxon>
        <taxon>Pseudomonadati</taxon>
        <taxon>Pseudomonadota</taxon>
        <taxon>Gammaproteobacteria</taxon>
        <taxon>Enterobacterales</taxon>
        <taxon>Enterobacteriaceae</taxon>
        <taxon>Shigella</taxon>
    </lineage>
</organism>
<dbReference type="EMBL" id="CP000038">
    <property type="protein sequence ID" value="AAZ89133.1"/>
    <property type="molecule type" value="Genomic_DNA"/>
</dbReference>
<dbReference type="RefSeq" id="WP_000254839.1">
    <property type="nucleotide sequence ID" value="NC_007384.1"/>
</dbReference>
<dbReference type="SMR" id="Q3YZC9"/>
<dbReference type="GeneID" id="93774718"/>
<dbReference type="KEGG" id="ssn:SSON_2502"/>
<dbReference type="HOGENOM" id="CLU_070331_1_0_6"/>
<dbReference type="Proteomes" id="UP000002529">
    <property type="component" value="Chromosome"/>
</dbReference>
<dbReference type="GO" id="GO:0005886">
    <property type="term" value="C:plasma membrane"/>
    <property type="evidence" value="ECO:0007669"/>
    <property type="project" value="UniProtKB-SubCell"/>
</dbReference>
<dbReference type="GO" id="GO:0009675">
    <property type="term" value="F:high-affinity sulfate:proton symporter activity"/>
    <property type="evidence" value="ECO:0007669"/>
    <property type="project" value="TreeGrafter"/>
</dbReference>
<dbReference type="GO" id="GO:0019344">
    <property type="term" value="P:cysteine biosynthetic process"/>
    <property type="evidence" value="ECO:0007669"/>
    <property type="project" value="UniProtKB-UniRule"/>
</dbReference>
<dbReference type="GO" id="GO:0000103">
    <property type="term" value="P:sulfate assimilation"/>
    <property type="evidence" value="ECO:0007669"/>
    <property type="project" value="InterPro"/>
</dbReference>
<dbReference type="HAMAP" id="MF_00468">
    <property type="entry name" value="CysZ"/>
    <property type="match status" value="1"/>
</dbReference>
<dbReference type="InterPro" id="IPR050480">
    <property type="entry name" value="CysZ_sulfate_transptr"/>
</dbReference>
<dbReference type="InterPro" id="IPR022985">
    <property type="entry name" value="Sulfate_CysZ"/>
</dbReference>
<dbReference type="NCBIfam" id="NF003433">
    <property type="entry name" value="PRK04949.1"/>
    <property type="match status" value="1"/>
</dbReference>
<dbReference type="PANTHER" id="PTHR37468">
    <property type="entry name" value="SULFATE TRANSPORTER CYSZ"/>
    <property type="match status" value="1"/>
</dbReference>
<dbReference type="PANTHER" id="PTHR37468:SF1">
    <property type="entry name" value="SULFATE TRANSPORTER CYSZ"/>
    <property type="match status" value="1"/>
</dbReference>
<dbReference type="Pfam" id="PF07264">
    <property type="entry name" value="EI24"/>
    <property type="match status" value="1"/>
</dbReference>
<reference key="1">
    <citation type="journal article" date="2005" name="Nucleic Acids Res.">
        <title>Genome dynamics and diversity of Shigella species, the etiologic agents of bacillary dysentery.</title>
        <authorList>
            <person name="Yang F."/>
            <person name="Yang J."/>
            <person name="Zhang X."/>
            <person name="Chen L."/>
            <person name="Jiang Y."/>
            <person name="Yan Y."/>
            <person name="Tang X."/>
            <person name="Wang J."/>
            <person name="Xiong Z."/>
            <person name="Dong J."/>
            <person name="Xue Y."/>
            <person name="Zhu Y."/>
            <person name="Xu X."/>
            <person name="Sun L."/>
            <person name="Chen S."/>
            <person name="Nie H."/>
            <person name="Peng J."/>
            <person name="Xu J."/>
            <person name="Wang Y."/>
            <person name="Yuan Z."/>
            <person name="Wen Y."/>
            <person name="Yao Z."/>
            <person name="Shen Y."/>
            <person name="Qiang B."/>
            <person name="Hou Y."/>
            <person name="Yu J."/>
            <person name="Jin Q."/>
        </authorList>
    </citation>
    <scope>NUCLEOTIDE SEQUENCE [LARGE SCALE GENOMIC DNA]</scope>
    <source>
        <strain>Ss046</strain>
    </source>
</reference>
<proteinExistence type="inferred from homology"/>
<gene>
    <name evidence="1" type="primary">cysZ</name>
    <name type="ordered locus">SSON_2502</name>
</gene>
<feature type="chain" id="PRO_1000013720" description="Sulfate transporter CysZ">
    <location>
        <begin position="1"/>
        <end position="253"/>
    </location>
</feature>
<feature type="transmembrane region" description="Helical" evidence="1">
    <location>
        <begin position="31"/>
        <end position="51"/>
    </location>
</feature>
<feature type="transmembrane region" description="Helical" evidence="1">
    <location>
        <begin position="75"/>
        <end position="95"/>
    </location>
</feature>
<feature type="transmembrane region" description="Helical" evidence="1">
    <location>
        <begin position="151"/>
        <end position="171"/>
    </location>
</feature>
<feature type="transmembrane region" description="Helical" evidence="1">
    <location>
        <begin position="222"/>
        <end position="242"/>
    </location>
</feature>
<comment type="function">
    <text evidence="1">High affinity, high specificity proton-dependent sulfate transporter, which mediates sulfate uptake. Provides the sulfur source for the cysteine synthesis pathway.</text>
</comment>
<comment type="subcellular location">
    <subcellularLocation>
        <location evidence="1">Cell inner membrane</location>
        <topology evidence="1">Multi-pass membrane protein</topology>
    </subcellularLocation>
</comment>
<comment type="similarity">
    <text evidence="1">Belongs to the CysZ family.</text>
</comment>